<dbReference type="EMBL" id="S70316">
    <property type="protein sequence ID" value="AAB30633.1"/>
    <property type="molecule type" value="mRNA"/>
</dbReference>
<dbReference type="PIR" id="I56481">
    <property type="entry name" value="I56481"/>
</dbReference>
<dbReference type="SMR" id="Q63969"/>
<dbReference type="MEROPS" id="I04.001"/>
<dbReference type="GlyCosmos" id="Q63969">
    <property type="glycosylation" value="3 sites, No reported glycans"/>
</dbReference>
<dbReference type="MGI" id="MGI:98376">
    <property type="gene designation" value="Serpina1"/>
</dbReference>
<dbReference type="GO" id="GO:0005615">
    <property type="term" value="C:extracellular space"/>
    <property type="evidence" value="ECO:0007669"/>
    <property type="project" value="InterPro"/>
</dbReference>
<dbReference type="GO" id="GO:0004867">
    <property type="term" value="F:serine-type endopeptidase inhibitor activity"/>
    <property type="evidence" value="ECO:0007669"/>
    <property type="project" value="UniProtKB-KW"/>
</dbReference>
<dbReference type="GO" id="GO:0034097">
    <property type="term" value="P:response to cytokine"/>
    <property type="evidence" value="ECO:0007669"/>
    <property type="project" value="UniProtKB-ARBA"/>
</dbReference>
<dbReference type="GO" id="GO:0043434">
    <property type="term" value="P:response to peptide hormone"/>
    <property type="evidence" value="ECO:0007669"/>
    <property type="project" value="UniProtKB-ARBA"/>
</dbReference>
<dbReference type="CDD" id="cd02056">
    <property type="entry name" value="serpinA1_A1AT"/>
    <property type="match status" value="1"/>
</dbReference>
<dbReference type="FunFam" id="2.30.39.10:FF:000003">
    <property type="entry name" value="alpha-1-antitrypsin isoform X1"/>
    <property type="match status" value="1"/>
</dbReference>
<dbReference type="FunFam" id="3.30.497.10:FF:000001">
    <property type="entry name" value="Serine protease inhibitor"/>
    <property type="match status" value="1"/>
</dbReference>
<dbReference type="FunFam" id="2.10.310.10:FF:000001">
    <property type="entry name" value="Serpin family A member 1"/>
    <property type="match status" value="1"/>
</dbReference>
<dbReference type="Gene3D" id="2.30.39.10">
    <property type="entry name" value="Alpha-1-antitrypsin, domain 1"/>
    <property type="match status" value="1"/>
</dbReference>
<dbReference type="Gene3D" id="3.30.497.10">
    <property type="entry name" value="Antithrombin, subunit I, domain 2"/>
    <property type="match status" value="1"/>
</dbReference>
<dbReference type="Gene3D" id="2.10.310.10">
    <property type="entry name" value="Serpins superfamily"/>
    <property type="match status" value="1"/>
</dbReference>
<dbReference type="InterPro" id="IPR023795">
    <property type="entry name" value="Serpin_CS"/>
</dbReference>
<dbReference type="InterPro" id="IPR023796">
    <property type="entry name" value="Serpin_dom"/>
</dbReference>
<dbReference type="InterPro" id="IPR000215">
    <property type="entry name" value="Serpin_fam"/>
</dbReference>
<dbReference type="InterPro" id="IPR036186">
    <property type="entry name" value="Serpin_sf"/>
</dbReference>
<dbReference type="InterPro" id="IPR042178">
    <property type="entry name" value="Serpin_sf_1"/>
</dbReference>
<dbReference type="InterPro" id="IPR042185">
    <property type="entry name" value="Serpin_sf_2"/>
</dbReference>
<dbReference type="PANTHER" id="PTHR11461:SF165">
    <property type="entry name" value="ALPHA-1-ANTITRYPSIN"/>
    <property type="match status" value="1"/>
</dbReference>
<dbReference type="PANTHER" id="PTHR11461">
    <property type="entry name" value="SERINE PROTEASE INHIBITOR, SERPIN"/>
    <property type="match status" value="1"/>
</dbReference>
<dbReference type="Pfam" id="PF00079">
    <property type="entry name" value="Serpin"/>
    <property type="match status" value="1"/>
</dbReference>
<dbReference type="SMART" id="SM00093">
    <property type="entry name" value="SERPIN"/>
    <property type="match status" value="1"/>
</dbReference>
<dbReference type="SUPFAM" id="SSF56574">
    <property type="entry name" value="Serpins"/>
    <property type="match status" value="1"/>
</dbReference>
<dbReference type="PROSITE" id="PS00284">
    <property type="entry name" value="SERPIN"/>
    <property type="match status" value="1"/>
</dbReference>
<sequence length="413" mass="46260">MTPSISWRLLLLAGLCCLVPSYLAEDVQETDTSQKDQSPASHEMATNLGDFAFSLYRELVHQSNTSNIFFSPVSIATAFALLSLGSKGDTQTQILEGLQFNLTQTSEADIHKVFQHLLQTLNRPDSELQLSTGNGLFVNNDLKLVEKFLEEAKNHYQSEVFSVNFAKSEEARKMINDFVEKGTQGKIVDAVKDLDEDTVFALANYIFFQGKWKTPFDPEHTTEADFHVNESTTVRVPMMNLMRMLDVHYCSTLSSWVLMMDYLGNATAVFLLPDDGKMQHLEQTLNKELISKFLLNRHRSLAEIHFPRLSISGSYNLKALMAPLGITRVFNNGADLSGITEENAPLRLSKAVHKAVLTIDERGTEAAATTIVEAVFMSLPPILHFNHPFVFTIVETHTQTPLFVGKVVDPTRK</sequence>
<reference key="1">
    <citation type="journal article" date="1994" name="J. Mol. Evol.">
        <title>Evolution of murine alpha 1-proteinase inhibitors: gene amplification and reactive center divergence.</title>
        <authorList>
            <person name="Rheaume C."/>
            <person name="Goodwin R.L."/>
            <person name="Latimer J.J."/>
            <person name="Baumann H."/>
            <person name="Berger F.G."/>
        </authorList>
    </citation>
    <scope>NUCLEOTIDE SEQUENCE [MRNA]</scope>
</reference>
<evidence type="ECO:0000250" key="1"/>
<evidence type="ECO:0000250" key="2">
    <source>
        <dbReference type="UniProtKB" id="P01009"/>
    </source>
</evidence>
<evidence type="ECO:0000255" key="3"/>
<evidence type="ECO:0000305" key="4"/>
<gene>
    <name type="primary">Serpina1</name>
</gene>
<keyword id="KW-0325">Glycoprotein</keyword>
<keyword id="KW-0597">Phosphoprotein</keyword>
<keyword id="KW-0646">Protease inhibitor</keyword>
<keyword id="KW-0964">Secreted</keyword>
<keyword id="KW-0722">Serine protease inhibitor</keyword>
<keyword id="KW-0732">Signal</keyword>
<proteinExistence type="evidence at transcript level"/>
<protein>
    <recommendedName>
        <fullName>Alpha-1-antiproteinase</fullName>
    </recommendedName>
    <alternativeName>
        <fullName>Alpha-1-antitrypsin</fullName>
    </alternativeName>
    <alternativeName>
        <fullName>Alpha-1-proteinase inhibitor</fullName>
    </alternativeName>
    <alternativeName>
        <fullName>Serpin A1</fullName>
    </alternativeName>
</protein>
<organism>
    <name type="scientific">Mus saxicola</name>
    <name type="common">Brown spiny mouse</name>
    <name type="synonym">Rock-loving mouse</name>
    <dbReference type="NCBI Taxonomy" id="10094"/>
    <lineage>
        <taxon>Eukaryota</taxon>
        <taxon>Metazoa</taxon>
        <taxon>Chordata</taxon>
        <taxon>Craniata</taxon>
        <taxon>Vertebrata</taxon>
        <taxon>Euteleostomi</taxon>
        <taxon>Mammalia</taxon>
        <taxon>Eutheria</taxon>
        <taxon>Euarchontoglires</taxon>
        <taxon>Glires</taxon>
        <taxon>Rodentia</taxon>
        <taxon>Myomorpha</taxon>
        <taxon>Muroidea</taxon>
        <taxon>Muridae</taxon>
        <taxon>Murinae</taxon>
        <taxon>Mus</taxon>
        <taxon>Pyromys</taxon>
    </lineage>
</organism>
<comment type="function">
    <text evidence="1">Inhibitor of serine proteases. The primary target is elastase, but also has a moderate affinity for plasmin and thrombin (By similarity).</text>
</comment>
<comment type="subunit">
    <text evidence="2">Interacts with CELA2A (By similarity). Interacts with ERGIC3 and LMAN1/ERGIC53 (By similarity). Interacts with PRSS1/Trypsin (By similarity).</text>
</comment>
<comment type="subcellular location">
    <subcellularLocation>
        <location evidence="1">Secreted</location>
    </subcellularLocation>
</comment>
<comment type="domain">
    <text evidence="1">The reactive center loop (RCL) extends out from the body of the protein and directs binding to the target protease. The protease cleaves the serpin at the reactive site within the RCL, establishing a covalent linkage between the serpin reactive site and the active site of the protease. The resulting inactive serpin-protease complex is highly stable (By similarity).</text>
</comment>
<comment type="similarity">
    <text evidence="4">Belongs to the serpin family.</text>
</comment>
<accession>Q63969</accession>
<name>A1AT_MUSSA</name>
<feature type="signal peptide" evidence="3">
    <location>
        <begin position="1"/>
        <end position="24"/>
    </location>
</feature>
<feature type="chain" id="PRO_0000032395" description="Alpha-1-antiproteinase">
    <location>
        <begin position="25"/>
        <end position="413"/>
    </location>
</feature>
<feature type="region of interest" description="RCL">
    <location>
        <begin position="368"/>
        <end position="387"/>
    </location>
</feature>
<feature type="site" description="Reactive bond" evidence="1">
    <location>
        <begin position="377"/>
        <end position="378"/>
    </location>
</feature>
<feature type="modified residue" description="Phosphoserine" evidence="2">
    <location>
        <position position="33"/>
    </location>
</feature>
<feature type="modified residue" description="Phosphoserine" evidence="2">
    <location>
        <position position="378"/>
    </location>
</feature>
<feature type="glycosylation site" description="N-linked (GlcNAc...) asparagine" evidence="3">
    <location>
        <position position="64"/>
    </location>
</feature>
<feature type="glycosylation site" description="N-linked (GlcNAc...) asparagine" evidence="3">
    <location>
        <position position="101"/>
    </location>
</feature>
<feature type="glycosylation site" description="N-linked (GlcNAc...) asparagine" evidence="3">
    <location>
        <position position="265"/>
    </location>
</feature>